<reference key="1">
    <citation type="journal article" date="2005" name="Science">
        <title>The transcriptional landscape of the mammalian genome.</title>
        <authorList>
            <person name="Carninci P."/>
            <person name="Kasukawa T."/>
            <person name="Katayama S."/>
            <person name="Gough J."/>
            <person name="Frith M.C."/>
            <person name="Maeda N."/>
            <person name="Oyama R."/>
            <person name="Ravasi T."/>
            <person name="Lenhard B."/>
            <person name="Wells C."/>
            <person name="Kodzius R."/>
            <person name="Shimokawa K."/>
            <person name="Bajic V.B."/>
            <person name="Brenner S.E."/>
            <person name="Batalov S."/>
            <person name="Forrest A.R."/>
            <person name="Zavolan M."/>
            <person name="Davis M.J."/>
            <person name="Wilming L.G."/>
            <person name="Aidinis V."/>
            <person name="Allen J.E."/>
            <person name="Ambesi-Impiombato A."/>
            <person name="Apweiler R."/>
            <person name="Aturaliya R.N."/>
            <person name="Bailey T.L."/>
            <person name="Bansal M."/>
            <person name="Baxter L."/>
            <person name="Beisel K.W."/>
            <person name="Bersano T."/>
            <person name="Bono H."/>
            <person name="Chalk A.M."/>
            <person name="Chiu K.P."/>
            <person name="Choudhary V."/>
            <person name="Christoffels A."/>
            <person name="Clutterbuck D.R."/>
            <person name="Crowe M.L."/>
            <person name="Dalla E."/>
            <person name="Dalrymple B.P."/>
            <person name="de Bono B."/>
            <person name="Della Gatta G."/>
            <person name="di Bernardo D."/>
            <person name="Down T."/>
            <person name="Engstrom P."/>
            <person name="Fagiolini M."/>
            <person name="Faulkner G."/>
            <person name="Fletcher C.F."/>
            <person name="Fukushima T."/>
            <person name="Furuno M."/>
            <person name="Futaki S."/>
            <person name="Gariboldi M."/>
            <person name="Georgii-Hemming P."/>
            <person name="Gingeras T.R."/>
            <person name="Gojobori T."/>
            <person name="Green R.E."/>
            <person name="Gustincich S."/>
            <person name="Harbers M."/>
            <person name="Hayashi Y."/>
            <person name="Hensch T.K."/>
            <person name="Hirokawa N."/>
            <person name="Hill D."/>
            <person name="Huminiecki L."/>
            <person name="Iacono M."/>
            <person name="Ikeo K."/>
            <person name="Iwama A."/>
            <person name="Ishikawa T."/>
            <person name="Jakt M."/>
            <person name="Kanapin A."/>
            <person name="Katoh M."/>
            <person name="Kawasawa Y."/>
            <person name="Kelso J."/>
            <person name="Kitamura H."/>
            <person name="Kitano H."/>
            <person name="Kollias G."/>
            <person name="Krishnan S.P."/>
            <person name="Kruger A."/>
            <person name="Kummerfeld S.K."/>
            <person name="Kurochkin I.V."/>
            <person name="Lareau L.F."/>
            <person name="Lazarevic D."/>
            <person name="Lipovich L."/>
            <person name="Liu J."/>
            <person name="Liuni S."/>
            <person name="McWilliam S."/>
            <person name="Madan Babu M."/>
            <person name="Madera M."/>
            <person name="Marchionni L."/>
            <person name="Matsuda H."/>
            <person name="Matsuzawa S."/>
            <person name="Miki H."/>
            <person name="Mignone F."/>
            <person name="Miyake S."/>
            <person name="Morris K."/>
            <person name="Mottagui-Tabar S."/>
            <person name="Mulder N."/>
            <person name="Nakano N."/>
            <person name="Nakauchi H."/>
            <person name="Ng P."/>
            <person name="Nilsson R."/>
            <person name="Nishiguchi S."/>
            <person name="Nishikawa S."/>
            <person name="Nori F."/>
            <person name="Ohara O."/>
            <person name="Okazaki Y."/>
            <person name="Orlando V."/>
            <person name="Pang K.C."/>
            <person name="Pavan W.J."/>
            <person name="Pavesi G."/>
            <person name="Pesole G."/>
            <person name="Petrovsky N."/>
            <person name="Piazza S."/>
            <person name="Reed J."/>
            <person name="Reid J.F."/>
            <person name="Ring B.Z."/>
            <person name="Ringwald M."/>
            <person name="Rost B."/>
            <person name="Ruan Y."/>
            <person name="Salzberg S.L."/>
            <person name="Sandelin A."/>
            <person name="Schneider C."/>
            <person name="Schoenbach C."/>
            <person name="Sekiguchi K."/>
            <person name="Semple C.A."/>
            <person name="Seno S."/>
            <person name="Sessa L."/>
            <person name="Sheng Y."/>
            <person name="Shibata Y."/>
            <person name="Shimada H."/>
            <person name="Shimada K."/>
            <person name="Silva D."/>
            <person name="Sinclair B."/>
            <person name="Sperling S."/>
            <person name="Stupka E."/>
            <person name="Sugiura K."/>
            <person name="Sultana R."/>
            <person name="Takenaka Y."/>
            <person name="Taki K."/>
            <person name="Tammoja K."/>
            <person name="Tan S.L."/>
            <person name="Tang S."/>
            <person name="Taylor M.S."/>
            <person name="Tegner J."/>
            <person name="Teichmann S.A."/>
            <person name="Ueda H.R."/>
            <person name="van Nimwegen E."/>
            <person name="Verardo R."/>
            <person name="Wei C.L."/>
            <person name="Yagi K."/>
            <person name="Yamanishi H."/>
            <person name="Zabarovsky E."/>
            <person name="Zhu S."/>
            <person name="Zimmer A."/>
            <person name="Hide W."/>
            <person name="Bult C."/>
            <person name="Grimmond S.M."/>
            <person name="Teasdale R.D."/>
            <person name="Liu E.T."/>
            <person name="Brusic V."/>
            <person name="Quackenbush J."/>
            <person name="Wahlestedt C."/>
            <person name="Mattick J.S."/>
            <person name="Hume D.A."/>
            <person name="Kai C."/>
            <person name="Sasaki D."/>
            <person name="Tomaru Y."/>
            <person name="Fukuda S."/>
            <person name="Kanamori-Katayama M."/>
            <person name="Suzuki M."/>
            <person name="Aoki J."/>
            <person name="Arakawa T."/>
            <person name="Iida J."/>
            <person name="Imamura K."/>
            <person name="Itoh M."/>
            <person name="Kato T."/>
            <person name="Kawaji H."/>
            <person name="Kawagashira N."/>
            <person name="Kawashima T."/>
            <person name="Kojima M."/>
            <person name="Kondo S."/>
            <person name="Konno H."/>
            <person name="Nakano K."/>
            <person name="Ninomiya N."/>
            <person name="Nishio T."/>
            <person name="Okada M."/>
            <person name="Plessy C."/>
            <person name="Shibata K."/>
            <person name="Shiraki T."/>
            <person name="Suzuki S."/>
            <person name="Tagami M."/>
            <person name="Waki K."/>
            <person name="Watahiki A."/>
            <person name="Okamura-Oho Y."/>
            <person name="Suzuki H."/>
            <person name="Kawai J."/>
            <person name="Hayashizaki Y."/>
        </authorList>
    </citation>
    <scope>NUCLEOTIDE SEQUENCE [LARGE SCALE MRNA]</scope>
    <source>
        <strain>C57BL/6J</strain>
        <tissue>Olfactory bulb</tissue>
    </source>
</reference>
<reference key="2">
    <citation type="journal article" date="2004" name="Genome Res.">
        <title>The status, quality, and expansion of the NIH full-length cDNA project: the Mammalian Gene Collection (MGC).</title>
        <authorList>
            <consortium name="The MGC Project Team"/>
        </authorList>
    </citation>
    <scope>NUCLEOTIDE SEQUENCE [LARGE SCALE MRNA]</scope>
    <source>
        <strain>C57BL/6J</strain>
        <strain>FVB/N</strain>
        <tissue>Brain</tissue>
        <tissue>Mammary gland</tissue>
    </source>
</reference>
<reference key="3">
    <citation type="journal article" date="2024" name="Sci. Immunol.">
        <title>The palmitoylation of gasdermin D directs its membrane translocation and pore formation during pyroptosis.</title>
        <authorList>
            <person name="Balasubramanian A."/>
            <person name="Hsu A.Y."/>
            <person name="Ghimire L."/>
            <person name="Tahir M."/>
            <person name="Devant P."/>
            <person name="Fontana P."/>
            <person name="Du G."/>
            <person name="Liu X."/>
            <person name="Fabin D."/>
            <person name="Kambara H."/>
            <person name="Xie X."/>
            <person name="Liu F."/>
            <person name="Hasegawa T."/>
            <person name="Xu R."/>
            <person name="Yu H."/>
            <person name="Chen M."/>
            <person name="Kolakowski S."/>
            <person name="Trauger S."/>
            <person name="Larsen M.R."/>
            <person name="Wei W."/>
            <person name="Wu H."/>
            <person name="Kagan J.C."/>
            <person name="Lieberman J."/>
            <person name="Luo H.R."/>
        </authorList>
    </citation>
    <scope>FUNCTION</scope>
</reference>
<sequence>MSVMVVRKKVTRKWEKLPGRNTFCCDGRVMMARQKGIFYLTLFLILGTCTLFFAFECRYLAVQLSPAIPVFAAMLFLFSMATLLRTSFSDPGVIPRALPDEAAFIEMEIEATNGAVPQGQRPPPRIKNFQINNQIVKLKYCYTCKIFRPPRASHCSICDNCVERFDHHCPWVGNCVGKRNYRYFYLFILSLSLLTIYVFAFNIVYVALKSLKIGFLETLKETPGTVLEVLICFFTLWSVVGLTGFHTFLVALNQTTNEDIKGSWTGKNRVQNPYSHGNIVKNCCEVLCGPLPPSVLDRRGILPLEESGSRPPSTQETSSSLLPQSPASTEHMNSNEMAEDTSIPEEMPPPEPPEPPQEASEAEK</sequence>
<gene>
    <name type="primary">Zdhhc9</name>
</gene>
<comment type="function">
    <text evidence="2 6">Palmitoyltransferase that catalyzes the addition of palmitate onto various protein substrates, such as ADRB2, GSDMD, HRAS, NRAS and CGAS (PubMed:38530158). The ZDHHC9-GOLGA7 complex is a palmitoyltransferase specific for HRAS and NRAS (By similarity). May have a palmitoyltransferase activity toward the beta-2 adrenergic receptor/ADRB2 and therefore regulate G protein-coupled receptor signaling (By similarity). Acts as a regulator of innate immunity by catalyzing palmitoylation of CGAS, thereby promoting CGAS homodimerization and cyclic GMP-AMP synthase activity (By similarity). Activates pyroptosis by catalyzing palmitoylation of gasdermin-D (GSDMD), thereby promoting membrane translocation and pore formation of GSDMD (PubMed:38530158).</text>
</comment>
<comment type="catalytic activity">
    <reaction evidence="2">
        <text>L-cysteinyl-[protein] + hexadecanoyl-CoA = S-hexadecanoyl-L-cysteinyl-[protein] + CoA</text>
        <dbReference type="Rhea" id="RHEA:36683"/>
        <dbReference type="Rhea" id="RHEA-COMP:10131"/>
        <dbReference type="Rhea" id="RHEA-COMP:11032"/>
        <dbReference type="ChEBI" id="CHEBI:29950"/>
        <dbReference type="ChEBI" id="CHEBI:57287"/>
        <dbReference type="ChEBI" id="CHEBI:57379"/>
        <dbReference type="ChEBI" id="CHEBI:74151"/>
        <dbReference type="EC" id="2.3.1.225"/>
    </reaction>
    <physiologicalReaction direction="left-to-right" evidence="2">
        <dbReference type="Rhea" id="RHEA:36684"/>
    </physiologicalReaction>
</comment>
<comment type="subunit">
    <text evidence="2">Interacts with GOLGA7.</text>
</comment>
<comment type="subcellular location">
    <subcellularLocation>
        <location evidence="2">Endoplasmic reticulum membrane</location>
        <topology evidence="3">Multi-pass membrane protein</topology>
    </subcellularLocation>
    <subcellularLocation>
        <location evidence="2">Golgi apparatus membrane</location>
        <topology evidence="3">Multi-pass membrane protein</topology>
    </subcellularLocation>
</comment>
<comment type="domain">
    <text evidence="1">The DHHC domain is required for palmitoyltransferase activity.</text>
</comment>
<comment type="similarity">
    <text evidence="7">Belongs to the DHHC palmitoyltransferase family. ERF2/ZDHHC9 subfamily.</text>
</comment>
<proteinExistence type="evidence at transcript level"/>
<protein>
    <recommendedName>
        <fullName>Palmitoyltransferase ZDHHC9</fullName>
        <ecNumber evidence="2">2.3.1.225</ecNumber>
    </recommendedName>
    <alternativeName>
        <fullName>Zinc finger DHHC domain-containing protein 9</fullName>
        <shortName>DHHC-9</shortName>
        <shortName>DHHC9</shortName>
    </alternativeName>
</protein>
<feature type="chain" id="PRO_0000212881" description="Palmitoyltransferase ZDHHC9">
    <location>
        <begin position="1"/>
        <end position="364"/>
    </location>
</feature>
<feature type="topological domain" description="Cytoplasmic" evidence="3">
    <location>
        <begin position="1"/>
        <end position="35"/>
    </location>
</feature>
<feature type="transmembrane region" description="Helical" evidence="3">
    <location>
        <begin position="36"/>
        <end position="56"/>
    </location>
</feature>
<feature type="topological domain" description="Lumenal" evidence="3">
    <location>
        <begin position="57"/>
        <end position="63"/>
    </location>
</feature>
<feature type="transmembrane region" description="Helical" evidence="3">
    <location>
        <begin position="64"/>
        <end position="84"/>
    </location>
</feature>
<feature type="topological domain" description="Cytoplasmic" evidence="3">
    <location>
        <begin position="85"/>
        <end position="183"/>
    </location>
</feature>
<feature type="transmembrane region" description="Helical" evidence="3">
    <location>
        <begin position="184"/>
        <end position="204"/>
    </location>
</feature>
<feature type="topological domain" description="Lumenal" evidence="3">
    <location>
        <begin position="205"/>
        <end position="228"/>
    </location>
</feature>
<feature type="transmembrane region" description="Helical" evidence="3">
    <location>
        <begin position="229"/>
        <end position="249"/>
    </location>
</feature>
<feature type="topological domain" description="Cytoplasmic" evidence="3">
    <location>
        <begin position="250"/>
        <end position="364"/>
    </location>
</feature>
<feature type="domain" description="DHHC" evidence="4">
    <location>
        <begin position="139"/>
        <end position="189"/>
    </location>
</feature>
<feature type="region of interest" description="Disordered" evidence="5">
    <location>
        <begin position="303"/>
        <end position="364"/>
    </location>
</feature>
<feature type="compositionally biased region" description="Polar residues" evidence="5">
    <location>
        <begin position="310"/>
        <end position="336"/>
    </location>
</feature>
<feature type="compositionally biased region" description="Pro residues" evidence="5">
    <location>
        <begin position="346"/>
        <end position="356"/>
    </location>
</feature>
<feature type="active site" description="S-palmitoyl cysteine intermediate" evidence="2">
    <location>
        <position position="169"/>
    </location>
</feature>
<accession>P59268</accession>
<accession>Q5BL19</accession>
<keyword id="KW-0012">Acyltransferase</keyword>
<keyword id="KW-0256">Endoplasmic reticulum</keyword>
<keyword id="KW-0333">Golgi apparatus</keyword>
<keyword id="KW-0449">Lipoprotein</keyword>
<keyword id="KW-0472">Membrane</keyword>
<keyword id="KW-0564">Palmitate</keyword>
<keyword id="KW-1185">Reference proteome</keyword>
<keyword id="KW-0808">Transferase</keyword>
<keyword id="KW-0812">Transmembrane</keyword>
<keyword id="KW-1133">Transmembrane helix</keyword>
<dbReference type="EC" id="2.3.1.225" evidence="2"/>
<dbReference type="EMBL" id="AK032233">
    <property type="protein sequence ID" value="BAC27774.1"/>
    <property type="molecule type" value="mRNA"/>
</dbReference>
<dbReference type="EMBL" id="BC042618">
    <property type="protein sequence ID" value="AAH42618.1"/>
    <property type="molecule type" value="mRNA"/>
</dbReference>
<dbReference type="EMBL" id="BC090832">
    <property type="protein sequence ID" value="AAH90832.1"/>
    <property type="molecule type" value="mRNA"/>
</dbReference>
<dbReference type="CCDS" id="CCDS40960.1"/>
<dbReference type="RefSeq" id="NP_766053.1">
    <property type="nucleotide sequence ID" value="NM_172465.4"/>
</dbReference>
<dbReference type="RefSeq" id="XP_006541517.1">
    <property type="nucleotide sequence ID" value="XM_006541454.5"/>
</dbReference>
<dbReference type="RefSeq" id="XP_036017773.1">
    <property type="nucleotide sequence ID" value="XM_036161880.1"/>
</dbReference>
<dbReference type="SMR" id="P59268"/>
<dbReference type="BioGRID" id="229020">
    <property type="interactions" value="1"/>
</dbReference>
<dbReference type="FunCoup" id="P59268">
    <property type="interactions" value="965"/>
</dbReference>
<dbReference type="STRING" id="10090.ENSMUSP00000044734"/>
<dbReference type="iPTMnet" id="P59268"/>
<dbReference type="PhosphoSitePlus" id="P59268"/>
<dbReference type="SwissPalm" id="P59268"/>
<dbReference type="PaxDb" id="10090-ENSMUSP00000044734"/>
<dbReference type="ProteomicsDB" id="275347"/>
<dbReference type="Antibodypedia" id="30107">
    <property type="antibodies" value="210 antibodies from 33 providers"/>
</dbReference>
<dbReference type="DNASU" id="208884"/>
<dbReference type="Ensembl" id="ENSMUST00000037960.11">
    <property type="protein sequence ID" value="ENSMUSP00000044734.5"/>
    <property type="gene ID" value="ENSMUSG00000036985.13"/>
</dbReference>
<dbReference type="Ensembl" id="ENSMUST00000088935.4">
    <property type="protein sequence ID" value="ENSMUSP00000086325.4"/>
    <property type="gene ID" value="ENSMUSG00000036985.13"/>
</dbReference>
<dbReference type="GeneID" id="208884"/>
<dbReference type="KEGG" id="mmu:208884"/>
<dbReference type="UCSC" id="uc009tbx.2">
    <property type="organism name" value="mouse"/>
</dbReference>
<dbReference type="AGR" id="MGI:2444393"/>
<dbReference type="CTD" id="51114"/>
<dbReference type="MGI" id="MGI:2444393">
    <property type="gene designation" value="Zdhhc9"/>
</dbReference>
<dbReference type="VEuPathDB" id="HostDB:ENSMUSG00000036985"/>
<dbReference type="eggNOG" id="KOG1311">
    <property type="taxonomic scope" value="Eukaryota"/>
</dbReference>
<dbReference type="GeneTree" id="ENSGT00940000159999"/>
<dbReference type="HOGENOM" id="CLU_018741_3_1_1"/>
<dbReference type="InParanoid" id="P59268"/>
<dbReference type="OMA" id="YVTMFLI"/>
<dbReference type="OrthoDB" id="4096362at2759"/>
<dbReference type="PhylomeDB" id="P59268"/>
<dbReference type="TreeFam" id="TF312923"/>
<dbReference type="Reactome" id="R-MMU-9648002">
    <property type="pathway name" value="RAS processing"/>
</dbReference>
<dbReference type="BioGRID-ORCS" id="208884">
    <property type="hits" value="2 hits in 82 CRISPR screens"/>
</dbReference>
<dbReference type="PRO" id="PR:P59268"/>
<dbReference type="Proteomes" id="UP000000589">
    <property type="component" value="Chromosome X"/>
</dbReference>
<dbReference type="RNAct" id="P59268">
    <property type="molecule type" value="protein"/>
</dbReference>
<dbReference type="Bgee" id="ENSMUSG00000036985">
    <property type="expression patterns" value="Expressed in esophagus and 244 other cell types or tissues"/>
</dbReference>
<dbReference type="GO" id="GO:0005829">
    <property type="term" value="C:cytosol"/>
    <property type="evidence" value="ECO:0007669"/>
    <property type="project" value="Ensembl"/>
</dbReference>
<dbReference type="GO" id="GO:0005783">
    <property type="term" value="C:endoplasmic reticulum"/>
    <property type="evidence" value="ECO:0000250"/>
    <property type="project" value="CAFA"/>
</dbReference>
<dbReference type="GO" id="GO:0005789">
    <property type="term" value="C:endoplasmic reticulum membrane"/>
    <property type="evidence" value="ECO:0007669"/>
    <property type="project" value="UniProtKB-SubCell"/>
</dbReference>
<dbReference type="GO" id="GO:0005794">
    <property type="term" value="C:Golgi apparatus"/>
    <property type="evidence" value="ECO:0000250"/>
    <property type="project" value="UniProtKB"/>
</dbReference>
<dbReference type="GO" id="GO:0000139">
    <property type="term" value="C:Golgi membrane"/>
    <property type="evidence" value="ECO:0000250"/>
    <property type="project" value="CAFA"/>
</dbReference>
<dbReference type="GO" id="GO:0002178">
    <property type="term" value="C:palmitoyltransferase complex"/>
    <property type="evidence" value="ECO:0000250"/>
    <property type="project" value="CAFA"/>
</dbReference>
<dbReference type="GO" id="GO:0019706">
    <property type="term" value="F:protein-cysteine S-palmitoyltransferase activity"/>
    <property type="evidence" value="ECO:0000250"/>
    <property type="project" value="UniProtKB"/>
</dbReference>
<dbReference type="GO" id="GO:0043849">
    <property type="term" value="F:Ras palmitoyltransferase activity"/>
    <property type="evidence" value="ECO:0000250"/>
    <property type="project" value="CAFA"/>
</dbReference>
<dbReference type="GO" id="GO:0018230">
    <property type="term" value="P:peptidyl-L-cysteine S-palmitoylation"/>
    <property type="evidence" value="ECO:0000250"/>
    <property type="project" value="CAFA"/>
</dbReference>
<dbReference type="GO" id="GO:0044794">
    <property type="term" value="P:positive regulation by host of viral process"/>
    <property type="evidence" value="ECO:0007669"/>
    <property type="project" value="Ensembl"/>
</dbReference>
<dbReference type="GO" id="GO:0141111">
    <property type="term" value="P:positive regulation of cGAS/STING signaling pathway"/>
    <property type="evidence" value="ECO:0007669"/>
    <property type="project" value="Ensembl"/>
</dbReference>
<dbReference type="GO" id="GO:0140639">
    <property type="term" value="P:positive regulation of pyroptotic inflammatory response"/>
    <property type="evidence" value="ECO:0000315"/>
    <property type="project" value="UniProtKB"/>
</dbReference>
<dbReference type="InterPro" id="IPR001594">
    <property type="entry name" value="Palmitoyltrfase_DHHC"/>
</dbReference>
<dbReference type="InterPro" id="IPR039859">
    <property type="entry name" value="PFA4/ZDH16/20/ERF2-like"/>
</dbReference>
<dbReference type="PANTHER" id="PTHR22883:SF71">
    <property type="entry name" value="PALMITOYLTRANSFERASE ZDHHC9"/>
    <property type="match status" value="1"/>
</dbReference>
<dbReference type="PANTHER" id="PTHR22883">
    <property type="entry name" value="ZINC FINGER DHHC DOMAIN CONTAINING PROTEIN"/>
    <property type="match status" value="1"/>
</dbReference>
<dbReference type="Pfam" id="PF01529">
    <property type="entry name" value="DHHC"/>
    <property type="match status" value="1"/>
</dbReference>
<dbReference type="PROSITE" id="PS50216">
    <property type="entry name" value="DHHC"/>
    <property type="match status" value="1"/>
</dbReference>
<evidence type="ECO:0000250" key="1">
    <source>
        <dbReference type="UniProtKB" id="Q8IUH5"/>
    </source>
</evidence>
<evidence type="ECO:0000250" key="2">
    <source>
        <dbReference type="UniProtKB" id="Q9Y397"/>
    </source>
</evidence>
<evidence type="ECO:0000255" key="3"/>
<evidence type="ECO:0000255" key="4">
    <source>
        <dbReference type="PROSITE-ProRule" id="PRU00067"/>
    </source>
</evidence>
<evidence type="ECO:0000256" key="5">
    <source>
        <dbReference type="SAM" id="MobiDB-lite"/>
    </source>
</evidence>
<evidence type="ECO:0000269" key="6">
    <source>
    </source>
</evidence>
<evidence type="ECO:0000305" key="7"/>
<name>ZDHC9_MOUSE</name>
<organism>
    <name type="scientific">Mus musculus</name>
    <name type="common">Mouse</name>
    <dbReference type="NCBI Taxonomy" id="10090"/>
    <lineage>
        <taxon>Eukaryota</taxon>
        <taxon>Metazoa</taxon>
        <taxon>Chordata</taxon>
        <taxon>Craniata</taxon>
        <taxon>Vertebrata</taxon>
        <taxon>Euteleostomi</taxon>
        <taxon>Mammalia</taxon>
        <taxon>Eutheria</taxon>
        <taxon>Euarchontoglires</taxon>
        <taxon>Glires</taxon>
        <taxon>Rodentia</taxon>
        <taxon>Myomorpha</taxon>
        <taxon>Muroidea</taxon>
        <taxon>Muridae</taxon>
        <taxon>Murinae</taxon>
        <taxon>Mus</taxon>
        <taxon>Mus</taxon>
    </lineage>
</organism>